<keyword id="KW-0175">Coiled coil</keyword>
<keyword id="KW-1185">Reference proteome</keyword>
<name>LTV1_CAEEL</name>
<evidence type="ECO:0000255" key="1"/>
<evidence type="ECO:0000256" key="2">
    <source>
        <dbReference type="SAM" id="MobiDB-lite"/>
    </source>
</evidence>
<evidence type="ECO:0000305" key="3"/>
<feature type="chain" id="PRO_0000302819" description="Protein LTV1 homolog">
    <location>
        <begin position="1"/>
        <end position="410"/>
    </location>
</feature>
<feature type="region of interest" description="Disordered" evidence="2">
    <location>
        <begin position="142"/>
        <end position="165"/>
    </location>
</feature>
<feature type="region of interest" description="Disordered" evidence="2">
    <location>
        <begin position="325"/>
        <end position="378"/>
    </location>
</feature>
<feature type="coiled-coil region" evidence="1">
    <location>
        <begin position="363"/>
        <end position="389"/>
    </location>
</feature>
<feature type="compositionally biased region" description="Acidic residues" evidence="2">
    <location>
        <begin position="151"/>
        <end position="165"/>
    </location>
</feature>
<feature type="compositionally biased region" description="Acidic residues" evidence="2">
    <location>
        <begin position="325"/>
        <end position="345"/>
    </location>
</feature>
<feature type="compositionally biased region" description="Basic and acidic residues" evidence="2">
    <location>
        <begin position="357"/>
        <end position="366"/>
    </location>
</feature>
<feature type="compositionally biased region" description="Basic residues" evidence="2">
    <location>
        <begin position="367"/>
        <end position="378"/>
    </location>
</feature>
<protein>
    <recommendedName>
        <fullName>Protein LTV1 homolog</fullName>
    </recommendedName>
</protein>
<gene>
    <name type="ORF">T23D8.3</name>
</gene>
<accession>O02327</accession>
<comment type="similarity">
    <text evidence="3">Belongs to the LTV1 family.</text>
</comment>
<proteinExistence type="inferred from homology"/>
<reference key="1">
    <citation type="journal article" date="1998" name="Science">
        <title>Genome sequence of the nematode C. elegans: a platform for investigating biology.</title>
        <authorList>
            <consortium name="The C. elegans sequencing consortium"/>
        </authorList>
    </citation>
    <scope>NUCLEOTIDE SEQUENCE [LARGE SCALE GENOMIC DNA]</scope>
    <source>
        <strain>Bristol N2</strain>
    </source>
</reference>
<organism>
    <name type="scientific">Caenorhabditis elegans</name>
    <dbReference type="NCBI Taxonomy" id="6239"/>
    <lineage>
        <taxon>Eukaryota</taxon>
        <taxon>Metazoa</taxon>
        <taxon>Ecdysozoa</taxon>
        <taxon>Nematoda</taxon>
        <taxon>Chromadorea</taxon>
        <taxon>Rhabditida</taxon>
        <taxon>Rhabditina</taxon>
        <taxon>Rhabditomorpha</taxon>
        <taxon>Rhabditoidea</taxon>
        <taxon>Rhabditidae</taxon>
        <taxon>Peloderinae</taxon>
        <taxon>Caenorhabditis</taxon>
    </lineage>
</organism>
<sequence>MGKRKAFIDKKASQSFRLVPDNRERSERFKPTQEHLEEQQKYGVYYDDDYDYLQHMRAVNEPMKLENVHEEVEKTTIKTSGSSAFPPAPPLFGLVGALKKPEFFDEDVANALEEVTDDRNTGELEDNFITLAGGLLDERTTVYRSTRRGEDSEEEEDDDEDDEMYDDYNDDELFGEEAVGEIRVERADQRVIDNAFEELMDREYNTDQIGELDGDDYDVGGALEPNAGRLHKLINDKGPSNAEYDEELAKHYVRERMRLIEEGVIKDKEEYEIVEVDEGTNKKMKWDCESFATQYTNIYNHPTLIKEPRGLSRKALKRFDKAVEEMDIAEEDEDDDEDMEDDDDKESVFSTVSTFRPKNETPEQRSLRKKAVKEARKLRRVEKKANKTMFAEEKRKLAKGRIGQIKARPI</sequence>
<dbReference type="EMBL" id="Z81128">
    <property type="protein sequence ID" value="CAB03401.1"/>
    <property type="molecule type" value="Genomic_DNA"/>
</dbReference>
<dbReference type="PIR" id="T25165">
    <property type="entry name" value="T25165"/>
</dbReference>
<dbReference type="RefSeq" id="NP_492637.1">
    <property type="nucleotide sequence ID" value="NM_060236.7"/>
</dbReference>
<dbReference type="BioGRID" id="38279">
    <property type="interactions" value="6"/>
</dbReference>
<dbReference type="DIP" id="DIP-25511N"/>
<dbReference type="FunCoup" id="O02327">
    <property type="interactions" value="1830"/>
</dbReference>
<dbReference type="IntAct" id="O02327">
    <property type="interactions" value="2"/>
</dbReference>
<dbReference type="STRING" id="6239.T23D8.3.2"/>
<dbReference type="PaxDb" id="6239-T23D8.3.2"/>
<dbReference type="PeptideAtlas" id="O02327"/>
<dbReference type="EnsemblMetazoa" id="T23D8.3.1">
    <property type="protein sequence ID" value="T23D8.3.1"/>
    <property type="gene ID" value="WBGene00011944"/>
</dbReference>
<dbReference type="GeneID" id="172857"/>
<dbReference type="KEGG" id="cel:CELE_T23D8.3"/>
<dbReference type="UCSC" id="T23D8.3">
    <property type="organism name" value="c. elegans"/>
</dbReference>
<dbReference type="AGR" id="WB:WBGene00011944"/>
<dbReference type="CTD" id="172857"/>
<dbReference type="WormBase" id="T23D8.3">
    <property type="protein sequence ID" value="CE14052"/>
    <property type="gene ID" value="WBGene00011944"/>
</dbReference>
<dbReference type="eggNOG" id="KOG2637">
    <property type="taxonomic scope" value="Eukaryota"/>
</dbReference>
<dbReference type="GeneTree" id="ENSGT00390000002789"/>
<dbReference type="HOGENOM" id="CLU_736329_0_0_1"/>
<dbReference type="InParanoid" id="O02327"/>
<dbReference type="OMA" id="HYVRERM"/>
<dbReference type="OrthoDB" id="5852896at2759"/>
<dbReference type="PhylomeDB" id="O02327"/>
<dbReference type="PRO" id="PR:O02327"/>
<dbReference type="Proteomes" id="UP000001940">
    <property type="component" value="Chromosome I"/>
</dbReference>
<dbReference type="Bgee" id="WBGene00011944">
    <property type="expression patterns" value="Expressed in larva and 4 other cell types or tissues"/>
</dbReference>
<dbReference type="GO" id="GO:0005829">
    <property type="term" value="C:cytosol"/>
    <property type="evidence" value="ECO:0000318"/>
    <property type="project" value="GO_Central"/>
</dbReference>
<dbReference type="GO" id="GO:0005634">
    <property type="term" value="C:nucleus"/>
    <property type="evidence" value="ECO:0000318"/>
    <property type="project" value="GO_Central"/>
</dbReference>
<dbReference type="GO" id="GO:0030688">
    <property type="term" value="C:preribosome, small subunit precursor"/>
    <property type="evidence" value="ECO:0000318"/>
    <property type="project" value="GO_Central"/>
</dbReference>
<dbReference type="GO" id="GO:0042274">
    <property type="term" value="P:ribosomal small subunit biogenesis"/>
    <property type="evidence" value="ECO:0000318"/>
    <property type="project" value="GO_Central"/>
</dbReference>
<dbReference type="GO" id="GO:0000056">
    <property type="term" value="P:ribosomal small subunit export from nucleus"/>
    <property type="evidence" value="ECO:0000318"/>
    <property type="project" value="GO_Central"/>
</dbReference>
<dbReference type="InterPro" id="IPR007307">
    <property type="entry name" value="Ltv1"/>
</dbReference>
<dbReference type="PANTHER" id="PTHR21531">
    <property type="entry name" value="LOW-TEMPERATURE VIABILITY PROTEIN LTV1-RELATED"/>
    <property type="match status" value="1"/>
</dbReference>
<dbReference type="PANTHER" id="PTHR21531:SF0">
    <property type="entry name" value="PROTEIN LTV1 HOMOLOG"/>
    <property type="match status" value="1"/>
</dbReference>
<dbReference type="Pfam" id="PF04180">
    <property type="entry name" value="LTV"/>
    <property type="match status" value="1"/>
</dbReference>